<feature type="chain" id="PRO_1000097991" description="ATP-dependent Clp protease ATP-binding subunit ClpX">
    <location>
        <begin position="1"/>
        <end position="424"/>
    </location>
</feature>
<feature type="domain" description="ClpX-type ZB" evidence="2">
    <location>
        <begin position="3"/>
        <end position="56"/>
    </location>
</feature>
<feature type="binding site" evidence="2">
    <location>
        <position position="15"/>
    </location>
    <ligand>
        <name>Zn(2+)</name>
        <dbReference type="ChEBI" id="CHEBI:29105"/>
    </ligand>
</feature>
<feature type="binding site" evidence="2">
    <location>
        <position position="18"/>
    </location>
    <ligand>
        <name>Zn(2+)</name>
        <dbReference type="ChEBI" id="CHEBI:29105"/>
    </ligand>
</feature>
<feature type="binding site" evidence="2">
    <location>
        <position position="37"/>
    </location>
    <ligand>
        <name>Zn(2+)</name>
        <dbReference type="ChEBI" id="CHEBI:29105"/>
    </ligand>
</feature>
<feature type="binding site" evidence="2">
    <location>
        <position position="40"/>
    </location>
    <ligand>
        <name>Zn(2+)</name>
        <dbReference type="ChEBI" id="CHEBI:29105"/>
    </ligand>
</feature>
<feature type="binding site" evidence="1">
    <location>
        <begin position="119"/>
        <end position="126"/>
    </location>
    <ligand>
        <name>ATP</name>
        <dbReference type="ChEBI" id="CHEBI:30616"/>
    </ligand>
</feature>
<evidence type="ECO:0000255" key="1">
    <source>
        <dbReference type="HAMAP-Rule" id="MF_00175"/>
    </source>
</evidence>
<evidence type="ECO:0000255" key="2">
    <source>
        <dbReference type="PROSITE-ProRule" id="PRU01250"/>
    </source>
</evidence>
<protein>
    <recommendedName>
        <fullName evidence="1">ATP-dependent Clp protease ATP-binding subunit ClpX</fullName>
    </recommendedName>
</protein>
<sequence length="424" mass="46680">MSKVGTSDSKNTLYCSFCGKSQHEVRKLIAGPTVFICDECVELCMDIIREENKSSLVKSRDGIPTPKEICKVLDDYVIGQNHAKKVLSVAVHNHYKRLNHQTKHNDVELAKSNILLIGPTGSGKTLLAQTLARILDVPFTMADATTLTEAGYVGEDVENIILKLLQAADYNVERAQRGIVYIDEIDKISRKSDNPSITRDVSGEGVQQALLKIMEGTVASVPPQGGRKHPQQEFLQVDTTNILFICGGAFAGLEKIISSRGRTTSIGFAAQVLAPEDRRTGEIFRHVEPEDLLKYGLIPEFVGRLPVVATLEDLDENSLKKILTDPKNALVKQYQRLFEMENVELTFADEALGAVARKAIERKTGARGLRSILESILLETMFDLPGLEGVEEVVISREVVDGTARPLYIYADRTDRAAETSASA</sequence>
<comment type="function">
    <text evidence="1">ATP-dependent specificity component of the Clp protease. It directs the protease to specific substrates. Can perform chaperone functions in the absence of ClpP.</text>
</comment>
<comment type="subunit">
    <text evidence="1">Component of the ClpX-ClpP complex. Forms a hexameric ring that, in the presence of ATP, binds to fourteen ClpP subunits assembled into a disk-like structure with a central cavity, resembling the structure of eukaryotic proteasomes.</text>
</comment>
<comment type="similarity">
    <text evidence="1">Belongs to the ClpX chaperone family.</text>
</comment>
<reference key="1">
    <citation type="submission" date="2008-05" db="EMBL/GenBank/DDBJ databases">
        <title>Complete sequence of Rhodopseudomonas palustris TIE-1.</title>
        <authorList>
            <consortium name="US DOE Joint Genome Institute"/>
            <person name="Lucas S."/>
            <person name="Copeland A."/>
            <person name="Lapidus A."/>
            <person name="Glavina del Rio T."/>
            <person name="Dalin E."/>
            <person name="Tice H."/>
            <person name="Pitluck S."/>
            <person name="Chain P."/>
            <person name="Malfatti S."/>
            <person name="Shin M."/>
            <person name="Vergez L."/>
            <person name="Lang D."/>
            <person name="Schmutz J."/>
            <person name="Larimer F."/>
            <person name="Land M."/>
            <person name="Hauser L."/>
            <person name="Kyrpides N."/>
            <person name="Mikhailova N."/>
            <person name="Emerson D."/>
            <person name="Newman D.K."/>
            <person name="Roden E."/>
            <person name="Richardson P."/>
        </authorList>
    </citation>
    <scope>NUCLEOTIDE SEQUENCE [LARGE SCALE GENOMIC DNA]</scope>
    <source>
        <strain>TIE-1</strain>
    </source>
</reference>
<keyword id="KW-0067">ATP-binding</keyword>
<keyword id="KW-0143">Chaperone</keyword>
<keyword id="KW-0479">Metal-binding</keyword>
<keyword id="KW-0547">Nucleotide-binding</keyword>
<keyword id="KW-0862">Zinc</keyword>
<organism>
    <name type="scientific">Rhodopseudomonas palustris (strain TIE-1)</name>
    <dbReference type="NCBI Taxonomy" id="395960"/>
    <lineage>
        <taxon>Bacteria</taxon>
        <taxon>Pseudomonadati</taxon>
        <taxon>Pseudomonadota</taxon>
        <taxon>Alphaproteobacteria</taxon>
        <taxon>Hyphomicrobiales</taxon>
        <taxon>Nitrobacteraceae</taxon>
        <taxon>Rhodopseudomonas</taxon>
    </lineage>
</organism>
<dbReference type="EMBL" id="CP001096">
    <property type="protein sequence ID" value="ACF01810.1"/>
    <property type="molecule type" value="Genomic_DNA"/>
</dbReference>
<dbReference type="RefSeq" id="WP_011158509.1">
    <property type="nucleotide sequence ID" value="NC_011004.1"/>
</dbReference>
<dbReference type="SMR" id="B3Q7P4"/>
<dbReference type="GeneID" id="66894046"/>
<dbReference type="KEGG" id="rpt:Rpal_3308"/>
<dbReference type="HOGENOM" id="CLU_014218_8_2_5"/>
<dbReference type="OrthoDB" id="9804062at2"/>
<dbReference type="Proteomes" id="UP000001725">
    <property type="component" value="Chromosome"/>
</dbReference>
<dbReference type="GO" id="GO:0009376">
    <property type="term" value="C:HslUV protease complex"/>
    <property type="evidence" value="ECO:0007669"/>
    <property type="project" value="TreeGrafter"/>
</dbReference>
<dbReference type="GO" id="GO:0005524">
    <property type="term" value="F:ATP binding"/>
    <property type="evidence" value="ECO:0007669"/>
    <property type="project" value="UniProtKB-UniRule"/>
</dbReference>
<dbReference type="GO" id="GO:0016887">
    <property type="term" value="F:ATP hydrolysis activity"/>
    <property type="evidence" value="ECO:0007669"/>
    <property type="project" value="InterPro"/>
</dbReference>
<dbReference type="GO" id="GO:0140662">
    <property type="term" value="F:ATP-dependent protein folding chaperone"/>
    <property type="evidence" value="ECO:0007669"/>
    <property type="project" value="InterPro"/>
</dbReference>
<dbReference type="GO" id="GO:0046983">
    <property type="term" value="F:protein dimerization activity"/>
    <property type="evidence" value="ECO:0007669"/>
    <property type="project" value="InterPro"/>
</dbReference>
<dbReference type="GO" id="GO:0051082">
    <property type="term" value="F:unfolded protein binding"/>
    <property type="evidence" value="ECO:0007669"/>
    <property type="project" value="UniProtKB-UniRule"/>
</dbReference>
<dbReference type="GO" id="GO:0008270">
    <property type="term" value="F:zinc ion binding"/>
    <property type="evidence" value="ECO:0007669"/>
    <property type="project" value="InterPro"/>
</dbReference>
<dbReference type="GO" id="GO:0051301">
    <property type="term" value="P:cell division"/>
    <property type="evidence" value="ECO:0007669"/>
    <property type="project" value="TreeGrafter"/>
</dbReference>
<dbReference type="GO" id="GO:0051603">
    <property type="term" value="P:proteolysis involved in protein catabolic process"/>
    <property type="evidence" value="ECO:0007669"/>
    <property type="project" value="TreeGrafter"/>
</dbReference>
<dbReference type="CDD" id="cd19497">
    <property type="entry name" value="RecA-like_ClpX"/>
    <property type="match status" value="1"/>
</dbReference>
<dbReference type="FunFam" id="1.10.8.60:FF:000002">
    <property type="entry name" value="ATP-dependent Clp protease ATP-binding subunit ClpX"/>
    <property type="match status" value="1"/>
</dbReference>
<dbReference type="FunFam" id="3.40.50.300:FF:000005">
    <property type="entry name" value="ATP-dependent Clp protease ATP-binding subunit ClpX"/>
    <property type="match status" value="1"/>
</dbReference>
<dbReference type="Gene3D" id="1.10.8.60">
    <property type="match status" value="1"/>
</dbReference>
<dbReference type="Gene3D" id="6.20.220.10">
    <property type="entry name" value="ClpX chaperone, C4-type zinc finger domain"/>
    <property type="match status" value="1"/>
</dbReference>
<dbReference type="Gene3D" id="3.40.50.300">
    <property type="entry name" value="P-loop containing nucleotide triphosphate hydrolases"/>
    <property type="match status" value="1"/>
</dbReference>
<dbReference type="HAMAP" id="MF_00175">
    <property type="entry name" value="ClpX"/>
    <property type="match status" value="1"/>
</dbReference>
<dbReference type="InterPro" id="IPR003593">
    <property type="entry name" value="AAA+_ATPase"/>
</dbReference>
<dbReference type="InterPro" id="IPR050052">
    <property type="entry name" value="ATP-dep_Clp_protease_ClpX"/>
</dbReference>
<dbReference type="InterPro" id="IPR003959">
    <property type="entry name" value="ATPase_AAA_core"/>
</dbReference>
<dbReference type="InterPro" id="IPR019489">
    <property type="entry name" value="Clp_ATPase_C"/>
</dbReference>
<dbReference type="InterPro" id="IPR004487">
    <property type="entry name" value="Clp_protease_ATP-bd_su_ClpX"/>
</dbReference>
<dbReference type="InterPro" id="IPR046425">
    <property type="entry name" value="ClpX_bact"/>
</dbReference>
<dbReference type="InterPro" id="IPR027417">
    <property type="entry name" value="P-loop_NTPase"/>
</dbReference>
<dbReference type="InterPro" id="IPR010603">
    <property type="entry name" value="Znf_CppX_C4"/>
</dbReference>
<dbReference type="InterPro" id="IPR038366">
    <property type="entry name" value="Znf_CppX_C4_sf"/>
</dbReference>
<dbReference type="NCBIfam" id="TIGR00382">
    <property type="entry name" value="clpX"/>
    <property type="match status" value="1"/>
</dbReference>
<dbReference type="NCBIfam" id="NF003745">
    <property type="entry name" value="PRK05342.1"/>
    <property type="match status" value="1"/>
</dbReference>
<dbReference type="PANTHER" id="PTHR48102:SF7">
    <property type="entry name" value="ATP-DEPENDENT CLP PROTEASE ATP-BINDING SUBUNIT CLPX-LIKE, MITOCHONDRIAL"/>
    <property type="match status" value="1"/>
</dbReference>
<dbReference type="PANTHER" id="PTHR48102">
    <property type="entry name" value="ATP-DEPENDENT CLP PROTEASE ATP-BINDING SUBUNIT CLPX-LIKE, MITOCHONDRIAL-RELATED"/>
    <property type="match status" value="1"/>
</dbReference>
<dbReference type="Pfam" id="PF07724">
    <property type="entry name" value="AAA_2"/>
    <property type="match status" value="1"/>
</dbReference>
<dbReference type="Pfam" id="PF10431">
    <property type="entry name" value="ClpB_D2-small"/>
    <property type="match status" value="1"/>
</dbReference>
<dbReference type="Pfam" id="PF06689">
    <property type="entry name" value="zf-C4_ClpX"/>
    <property type="match status" value="1"/>
</dbReference>
<dbReference type="SMART" id="SM00382">
    <property type="entry name" value="AAA"/>
    <property type="match status" value="1"/>
</dbReference>
<dbReference type="SMART" id="SM01086">
    <property type="entry name" value="ClpB_D2-small"/>
    <property type="match status" value="1"/>
</dbReference>
<dbReference type="SMART" id="SM00994">
    <property type="entry name" value="zf-C4_ClpX"/>
    <property type="match status" value="1"/>
</dbReference>
<dbReference type="SUPFAM" id="SSF57716">
    <property type="entry name" value="Glucocorticoid receptor-like (DNA-binding domain)"/>
    <property type="match status" value="1"/>
</dbReference>
<dbReference type="SUPFAM" id="SSF52540">
    <property type="entry name" value="P-loop containing nucleoside triphosphate hydrolases"/>
    <property type="match status" value="1"/>
</dbReference>
<dbReference type="PROSITE" id="PS51902">
    <property type="entry name" value="CLPX_ZB"/>
    <property type="match status" value="1"/>
</dbReference>
<gene>
    <name evidence="1" type="primary">clpX</name>
    <name type="ordered locus">Rpal_3308</name>
</gene>
<accession>B3Q7P4</accession>
<name>CLPX_RHOPT</name>
<proteinExistence type="inferred from homology"/>